<evidence type="ECO:0000250" key="1"/>
<evidence type="ECO:0000250" key="2">
    <source>
        <dbReference type="UniProtKB" id="O95445"/>
    </source>
</evidence>
<evidence type="ECO:0000255" key="3"/>
<evidence type="ECO:0000269" key="4">
    <source>
    </source>
</evidence>
<evidence type="ECO:0000269" key="5">
    <source>
    </source>
</evidence>
<evidence type="ECO:0000305" key="6"/>
<evidence type="ECO:0007829" key="7">
    <source>
        <dbReference type="PDB" id="2XKL"/>
    </source>
</evidence>
<feature type="chain" id="PRO_0000223279" description="Apolipoprotein M">
    <location>
        <begin position="1"/>
        <end position="190"/>
    </location>
</feature>
<feature type="signal peptide" description="Not cleaved" evidence="3">
    <location>
        <begin position="1"/>
        <end position="22" status="uncertain"/>
    </location>
</feature>
<feature type="binding site" evidence="2">
    <location>
        <position position="138"/>
    </location>
    <ligand>
        <name>tetradecanoate</name>
        <dbReference type="ChEBI" id="CHEBI:30807"/>
    </ligand>
</feature>
<feature type="binding site" evidence="2">
    <location>
        <position position="145"/>
    </location>
    <ligand>
        <name>tetradecanoate</name>
        <dbReference type="ChEBI" id="CHEBI:30807"/>
    </ligand>
</feature>
<feature type="disulfide bond" evidence="1">
    <location>
        <begin position="23"/>
        <end position="169"/>
    </location>
</feature>
<feature type="disulfide bond" evidence="5">
    <location>
        <begin position="95"/>
        <end position="185"/>
    </location>
</feature>
<feature type="disulfide bond" evidence="5">
    <location>
        <begin position="130"/>
        <end position="159"/>
    </location>
</feature>
<feature type="strand" evidence="7">
    <location>
        <begin position="28"/>
        <end position="34"/>
    </location>
</feature>
<feature type="strand" evidence="7">
    <location>
        <begin position="47"/>
        <end position="56"/>
    </location>
</feature>
<feature type="helix" evidence="7">
    <location>
        <begin position="57"/>
        <end position="59"/>
    </location>
</feature>
<feature type="helix" evidence="7">
    <location>
        <begin position="61"/>
        <end position="63"/>
    </location>
</feature>
<feature type="strand" evidence="7">
    <location>
        <begin position="66"/>
        <end position="75"/>
    </location>
</feature>
<feature type="strand" evidence="7">
    <location>
        <begin position="81"/>
        <end position="90"/>
    </location>
</feature>
<feature type="strand" evidence="7">
    <location>
        <begin position="95"/>
        <end position="104"/>
    </location>
</feature>
<feature type="helix" evidence="7">
    <location>
        <begin position="125"/>
        <end position="129"/>
    </location>
</feature>
<feature type="strand" evidence="7">
    <location>
        <begin position="133"/>
        <end position="140"/>
    </location>
</feature>
<feature type="strand" evidence="7">
    <location>
        <begin position="143"/>
        <end position="154"/>
    </location>
</feature>
<feature type="helix" evidence="7">
    <location>
        <begin position="157"/>
        <end position="169"/>
    </location>
</feature>
<feature type="strand" evidence="7">
    <location>
        <begin position="174"/>
        <end position="177"/>
    </location>
</feature>
<gene>
    <name type="primary">Apom</name>
    <name type="synonym">Ng20</name>
</gene>
<protein>
    <recommendedName>
        <fullName>Apolipoprotein M</fullName>
        <shortName>Apo-M</shortName>
        <shortName>ApoM</shortName>
    </recommendedName>
</protein>
<comment type="function">
    <text evidence="1">Probably involved in lipid transport. Can bind sphingosine-1-phosphate, myristic acid, palmitic acid and stearic acid, retinol, all-trans-retinoic acid and 9-cis-retinoic acid (By similarity).</text>
</comment>
<comment type="subunit">
    <text evidence="4">Interacts with LRP2; LRP2 mediates APOM renal uptake and subsequent lysosomal degradation.</text>
</comment>
<comment type="subcellular location">
    <subcellularLocation>
        <location evidence="6">Secreted</location>
    </subcellularLocation>
</comment>
<comment type="tissue specificity">
    <text>Expressed by the liver; secreted in plasma.</text>
</comment>
<comment type="similarity">
    <text evidence="6">Belongs to the calycin superfamily. Lipocalin family. Highly divergent.</text>
</comment>
<accession>Q9Z1R3</accession>
<sequence length="190" mass="21273">MFHQVWAALLSLYGLLFNSMNQCPEHSQLTALGMDDTETPEPHLGLWYFIAGAASTTEELATFDPVDNIVFNMAAGSAPRQLQLRATIRTKSGVCVPRKWTYRLTEGKGNMELRTEGRPDMKTDLFSSSCPGGIMLKETGQGYQRFLLYNRSPHPPEKCVEEFQSLTSCLDFKAFLVTPRNQEACPLSSK</sequence>
<organism>
    <name type="scientific">Mus musculus</name>
    <name type="common">Mouse</name>
    <dbReference type="NCBI Taxonomy" id="10090"/>
    <lineage>
        <taxon>Eukaryota</taxon>
        <taxon>Metazoa</taxon>
        <taxon>Chordata</taxon>
        <taxon>Craniata</taxon>
        <taxon>Vertebrata</taxon>
        <taxon>Euteleostomi</taxon>
        <taxon>Mammalia</taxon>
        <taxon>Eutheria</taxon>
        <taxon>Euarchontoglires</taxon>
        <taxon>Glires</taxon>
        <taxon>Rodentia</taxon>
        <taxon>Myomorpha</taxon>
        <taxon>Muroidea</taxon>
        <taxon>Muridae</taxon>
        <taxon>Murinae</taxon>
        <taxon>Mus</taxon>
        <taxon>Mus</taxon>
    </lineage>
</organism>
<dbReference type="EMBL" id="AF207820">
    <property type="protein sequence ID" value="AAF23407.1"/>
    <property type="molecule type" value="mRNA"/>
</dbReference>
<dbReference type="EMBL" id="AF109719">
    <property type="protein sequence ID" value="AAC82478.1"/>
    <property type="molecule type" value="Genomic_DNA"/>
</dbReference>
<dbReference type="EMBL" id="AK004530">
    <property type="protein sequence ID" value="BAB23349.1"/>
    <property type="molecule type" value="mRNA"/>
</dbReference>
<dbReference type="CCDS" id="CCDS28687.1"/>
<dbReference type="RefSeq" id="NP_061286.1">
    <property type="nucleotide sequence ID" value="NM_018816.2"/>
</dbReference>
<dbReference type="PDB" id="2XKL">
    <property type="method" value="X-ray"/>
    <property type="resolution" value="2.50 A"/>
    <property type="chains" value="A=20-190"/>
</dbReference>
<dbReference type="PDBsum" id="2XKL"/>
<dbReference type="SMR" id="Q9Z1R3"/>
<dbReference type="FunCoup" id="Q9Z1R3">
    <property type="interactions" value="32"/>
</dbReference>
<dbReference type="STRING" id="10090.ENSMUSP00000025249"/>
<dbReference type="iPTMnet" id="Q9Z1R3"/>
<dbReference type="PhosphoSitePlus" id="Q9Z1R3"/>
<dbReference type="CPTAC" id="non-CPTAC-5575"/>
<dbReference type="jPOST" id="Q9Z1R3"/>
<dbReference type="PaxDb" id="10090-ENSMUSP00000025249"/>
<dbReference type="PeptideAtlas" id="Q9Z1R3"/>
<dbReference type="ProteomicsDB" id="281801"/>
<dbReference type="Pumba" id="Q9Z1R3"/>
<dbReference type="Antibodypedia" id="27445">
    <property type="antibodies" value="540 antibodies from 38 providers"/>
</dbReference>
<dbReference type="DNASU" id="55938"/>
<dbReference type="Ensembl" id="ENSMUST00000025249.7">
    <property type="protein sequence ID" value="ENSMUSP00000025249.7"/>
    <property type="gene ID" value="ENSMUSG00000024391.8"/>
</dbReference>
<dbReference type="GeneID" id="55938"/>
<dbReference type="KEGG" id="mmu:55938"/>
<dbReference type="UCSC" id="uc008cga.1">
    <property type="organism name" value="mouse"/>
</dbReference>
<dbReference type="AGR" id="MGI:1930124"/>
<dbReference type="CTD" id="55937"/>
<dbReference type="MGI" id="MGI:1930124">
    <property type="gene designation" value="Apom"/>
</dbReference>
<dbReference type="VEuPathDB" id="HostDB:ENSMUSG00000024391"/>
<dbReference type="eggNOG" id="ENOG502S2IN">
    <property type="taxonomic scope" value="Eukaryota"/>
</dbReference>
<dbReference type="GeneTree" id="ENSGT00390000001026"/>
<dbReference type="HOGENOM" id="CLU_105274_0_0_1"/>
<dbReference type="InParanoid" id="Q9Z1R3"/>
<dbReference type="OMA" id="SGKWANC"/>
<dbReference type="OrthoDB" id="9944312at2759"/>
<dbReference type="PhylomeDB" id="Q9Z1R3"/>
<dbReference type="TreeFam" id="TF330771"/>
<dbReference type="Reactome" id="R-MMU-975634">
    <property type="pathway name" value="Retinoid metabolism and transport"/>
</dbReference>
<dbReference type="BioGRID-ORCS" id="55938">
    <property type="hits" value="2 hits in 79 CRISPR screens"/>
</dbReference>
<dbReference type="ChiTaRS" id="Apom">
    <property type="organism name" value="mouse"/>
</dbReference>
<dbReference type="EvolutionaryTrace" id="Q9Z1R3"/>
<dbReference type="PRO" id="PR:Q9Z1R3"/>
<dbReference type="Proteomes" id="UP000000589">
    <property type="component" value="Chromosome 17"/>
</dbReference>
<dbReference type="RNAct" id="Q9Z1R3">
    <property type="molecule type" value="protein"/>
</dbReference>
<dbReference type="Bgee" id="ENSMUSG00000024391">
    <property type="expression patterns" value="Expressed in yolk sac and 101 other cell types or tissues"/>
</dbReference>
<dbReference type="GO" id="GO:0034365">
    <property type="term" value="C:discoidal high-density lipoprotein particle"/>
    <property type="evidence" value="ECO:0000314"/>
    <property type="project" value="BHF-UCL"/>
</dbReference>
<dbReference type="GO" id="GO:0005576">
    <property type="term" value="C:extracellular region"/>
    <property type="evidence" value="ECO:0000314"/>
    <property type="project" value="MGI"/>
</dbReference>
<dbReference type="GO" id="GO:0034364">
    <property type="term" value="C:high-density lipoprotein particle"/>
    <property type="evidence" value="ECO:0000314"/>
    <property type="project" value="BHF-UCL"/>
</dbReference>
<dbReference type="GO" id="GO:0034362">
    <property type="term" value="C:low-density lipoprotein particle"/>
    <property type="evidence" value="ECO:0007669"/>
    <property type="project" value="Ensembl"/>
</dbReference>
<dbReference type="GO" id="GO:0034366">
    <property type="term" value="C:spherical high-density lipoprotein particle"/>
    <property type="evidence" value="ECO:0007669"/>
    <property type="project" value="Ensembl"/>
</dbReference>
<dbReference type="GO" id="GO:0034361">
    <property type="term" value="C:very-low-density lipoprotein particle"/>
    <property type="evidence" value="ECO:0007669"/>
    <property type="project" value="Ensembl"/>
</dbReference>
<dbReference type="GO" id="GO:0016209">
    <property type="term" value="F:antioxidant activity"/>
    <property type="evidence" value="ECO:0000314"/>
    <property type="project" value="BHF-UCL"/>
</dbReference>
<dbReference type="GO" id="GO:0005319">
    <property type="term" value="F:lipid transporter activity"/>
    <property type="evidence" value="ECO:0007669"/>
    <property type="project" value="Ensembl"/>
</dbReference>
<dbReference type="GO" id="GO:0005543">
    <property type="term" value="F:phospholipid binding"/>
    <property type="evidence" value="ECO:0000250"/>
    <property type="project" value="BHF-UCL"/>
</dbReference>
<dbReference type="GO" id="GO:0033344">
    <property type="term" value="P:cholesterol efflux"/>
    <property type="evidence" value="ECO:0000315"/>
    <property type="project" value="BHF-UCL"/>
</dbReference>
<dbReference type="GO" id="GO:0034380">
    <property type="term" value="P:high-density lipoprotein particle assembly"/>
    <property type="evidence" value="ECO:0000315"/>
    <property type="project" value="BHF-UCL"/>
</dbReference>
<dbReference type="GO" id="GO:0034384">
    <property type="term" value="P:high-density lipoprotein particle clearance"/>
    <property type="evidence" value="ECO:0000315"/>
    <property type="project" value="BHF-UCL"/>
</dbReference>
<dbReference type="GO" id="GO:0034375">
    <property type="term" value="P:high-density lipoprotein particle remodeling"/>
    <property type="evidence" value="ECO:0000315"/>
    <property type="project" value="BHF-UCL"/>
</dbReference>
<dbReference type="GO" id="GO:0042157">
    <property type="term" value="P:lipoprotein metabolic process"/>
    <property type="evidence" value="ECO:0000315"/>
    <property type="project" value="MGI"/>
</dbReference>
<dbReference type="GO" id="GO:0034445">
    <property type="term" value="P:negative regulation of plasma lipoprotein oxidation"/>
    <property type="evidence" value="ECO:0000314"/>
    <property type="project" value="BHF-UCL"/>
</dbReference>
<dbReference type="GO" id="GO:0043691">
    <property type="term" value="P:reverse cholesterol transport"/>
    <property type="evidence" value="ECO:0000315"/>
    <property type="project" value="MGI"/>
</dbReference>
<dbReference type="CDD" id="cd19450">
    <property type="entry name" value="lipocalin_ApoM"/>
    <property type="match status" value="1"/>
</dbReference>
<dbReference type="FunFam" id="2.40.128.20:FF:000011">
    <property type="entry name" value="Apolipoprotein M"/>
    <property type="match status" value="1"/>
</dbReference>
<dbReference type="Gene3D" id="2.40.128.20">
    <property type="match status" value="1"/>
</dbReference>
<dbReference type="InterPro" id="IPR022734">
    <property type="entry name" value="ApoM"/>
</dbReference>
<dbReference type="InterPro" id="IPR012674">
    <property type="entry name" value="Calycin"/>
</dbReference>
<dbReference type="PANTHER" id="PTHR32028">
    <property type="entry name" value="APOLIPOPROTEIN M"/>
    <property type="match status" value="1"/>
</dbReference>
<dbReference type="PANTHER" id="PTHR32028:SF1">
    <property type="entry name" value="APOLIPOPROTEIN M"/>
    <property type="match status" value="1"/>
</dbReference>
<dbReference type="Pfam" id="PF11032">
    <property type="entry name" value="ApoM"/>
    <property type="match status" value="1"/>
</dbReference>
<dbReference type="SUPFAM" id="SSF50814">
    <property type="entry name" value="Lipocalins"/>
    <property type="match status" value="1"/>
</dbReference>
<reference key="1">
    <citation type="submission" date="1999-11" db="EMBL/GenBank/DDBJ databases">
        <authorList>
            <person name="Xu N."/>
            <person name="Dahlbaeck B."/>
        </authorList>
    </citation>
    <scope>NUCLEOTIDE SEQUENCE [MRNA]</scope>
    <source>
        <tissue>Liver</tissue>
    </source>
</reference>
<reference key="2">
    <citation type="journal article" date="2003" name="Genome Res.">
        <title>Analysis of the gene-dense major histocompatibility complex class III region and its comparison to mouse.</title>
        <authorList>
            <person name="Xie T."/>
            <person name="Rowen L."/>
            <person name="Aguado B."/>
            <person name="Ahearn M.E."/>
            <person name="Madan A."/>
            <person name="Qin S."/>
            <person name="Campbell R.D."/>
            <person name="Hood L."/>
        </authorList>
    </citation>
    <scope>NUCLEOTIDE SEQUENCE [LARGE SCALE GENOMIC DNA]</scope>
    <source>
        <strain>129</strain>
    </source>
</reference>
<reference key="3">
    <citation type="journal article" date="2005" name="Science">
        <title>The transcriptional landscape of the mammalian genome.</title>
        <authorList>
            <person name="Carninci P."/>
            <person name="Kasukawa T."/>
            <person name="Katayama S."/>
            <person name="Gough J."/>
            <person name="Frith M.C."/>
            <person name="Maeda N."/>
            <person name="Oyama R."/>
            <person name="Ravasi T."/>
            <person name="Lenhard B."/>
            <person name="Wells C."/>
            <person name="Kodzius R."/>
            <person name="Shimokawa K."/>
            <person name="Bajic V.B."/>
            <person name="Brenner S.E."/>
            <person name="Batalov S."/>
            <person name="Forrest A.R."/>
            <person name="Zavolan M."/>
            <person name="Davis M.J."/>
            <person name="Wilming L.G."/>
            <person name="Aidinis V."/>
            <person name="Allen J.E."/>
            <person name="Ambesi-Impiombato A."/>
            <person name="Apweiler R."/>
            <person name="Aturaliya R.N."/>
            <person name="Bailey T.L."/>
            <person name="Bansal M."/>
            <person name="Baxter L."/>
            <person name="Beisel K.W."/>
            <person name="Bersano T."/>
            <person name="Bono H."/>
            <person name="Chalk A.M."/>
            <person name="Chiu K.P."/>
            <person name="Choudhary V."/>
            <person name="Christoffels A."/>
            <person name="Clutterbuck D.R."/>
            <person name="Crowe M.L."/>
            <person name="Dalla E."/>
            <person name="Dalrymple B.P."/>
            <person name="de Bono B."/>
            <person name="Della Gatta G."/>
            <person name="di Bernardo D."/>
            <person name="Down T."/>
            <person name="Engstrom P."/>
            <person name="Fagiolini M."/>
            <person name="Faulkner G."/>
            <person name="Fletcher C.F."/>
            <person name="Fukushima T."/>
            <person name="Furuno M."/>
            <person name="Futaki S."/>
            <person name="Gariboldi M."/>
            <person name="Georgii-Hemming P."/>
            <person name="Gingeras T.R."/>
            <person name="Gojobori T."/>
            <person name="Green R.E."/>
            <person name="Gustincich S."/>
            <person name="Harbers M."/>
            <person name="Hayashi Y."/>
            <person name="Hensch T.K."/>
            <person name="Hirokawa N."/>
            <person name="Hill D."/>
            <person name="Huminiecki L."/>
            <person name="Iacono M."/>
            <person name="Ikeo K."/>
            <person name="Iwama A."/>
            <person name="Ishikawa T."/>
            <person name="Jakt M."/>
            <person name="Kanapin A."/>
            <person name="Katoh M."/>
            <person name="Kawasawa Y."/>
            <person name="Kelso J."/>
            <person name="Kitamura H."/>
            <person name="Kitano H."/>
            <person name="Kollias G."/>
            <person name="Krishnan S.P."/>
            <person name="Kruger A."/>
            <person name="Kummerfeld S.K."/>
            <person name="Kurochkin I.V."/>
            <person name="Lareau L.F."/>
            <person name="Lazarevic D."/>
            <person name="Lipovich L."/>
            <person name="Liu J."/>
            <person name="Liuni S."/>
            <person name="McWilliam S."/>
            <person name="Madan Babu M."/>
            <person name="Madera M."/>
            <person name="Marchionni L."/>
            <person name="Matsuda H."/>
            <person name="Matsuzawa S."/>
            <person name="Miki H."/>
            <person name="Mignone F."/>
            <person name="Miyake S."/>
            <person name="Morris K."/>
            <person name="Mottagui-Tabar S."/>
            <person name="Mulder N."/>
            <person name="Nakano N."/>
            <person name="Nakauchi H."/>
            <person name="Ng P."/>
            <person name="Nilsson R."/>
            <person name="Nishiguchi S."/>
            <person name="Nishikawa S."/>
            <person name="Nori F."/>
            <person name="Ohara O."/>
            <person name="Okazaki Y."/>
            <person name="Orlando V."/>
            <person name="Pang K.C."/>
            <person name="Pavan W.J."/>
            <person name="Pavesi G."/>
            <person name="Pesole G."/>
            <person name="Petrovsky N."/>
            <person name="Piazza S."/>
            <person name="Reed J."/>
            <person name="Reid J.F."/>
            <person name="Ring B.Z."/>
            <person name="Ringwald M."/>
            <person name="Rost B."/>
            <person name="Ruan Y."/>
            <person name="Salzberg S.L."/>
            <person name="Sandelin A."/>
            <person name="Schneider C."/>
            <person name="Schoenbach C."/>
            <person name="Sekiguchi K."/>
            <person name="Semple C.A."/>
            <person name="Seno S."/>
            <person name="Sessa L."/>
            <person name="Sheng Y."/>
            <person name="Shibata Y."/>
            <person name="Shimada H."/>
            <person name="Shimada K."/>
            <person name="Silva D."/>
            <person name="Sinclair B."/>
            <person name="Sperling S."/>
            <person name="Stupka E."/>
            <person name="Sugiura K."/>
            <person name="Sultana R."/>
            <person name="Takenaka Y."/>
            <person name="Taki K."/>
            <person name="Tammoja K."/>
            <person name="Tan S.L."/>
            <person name="Tang S."/>
            <person name="Taylor M.S."/>
            <person name="Tegner J."/>
            <person name="Teichmann S.A."/>
            <person name="Ueda H.R."/>
            <person name="van Nimwegen E."/>
            <person name="Verardo R."/>
            <person name="Wei C.L."/>
            <person name="Yagi K."/>
            <person name="Yamanishi H."/>
            <person name="Zabarovsky E."/>
            <person name="Zhu S."/>
            <person name="Zimmer A."/>
            <person name="Hide W."/>
            <person name="Bult C."/>
            <person name="Grimmond S.M."/>
            <person name="Teasdale R.D."/>
            <person name="Liu E.T."/>
            <person name="Brusic V."/>
            <person name="Quackenbush J."/>
            <person name="Wahlestedt C."/>
            <person name="Mattick J.S."/>
            <person name="Hume D.A."/>
            <person name="Kai C."/>
            <person name="Sasaki D."/>
            <person name="Tomaru Y."/>
            <person name="Fukuda S."/>
            <person name="Kanamori-Katayama M."/>
            <person name="Suzuki M."/>
            <person name="Aoki J."/>
            <person name="Arakawa T."/>
            <person name="Iida J."/>
            <person name="Imamura K."/>
            <person name="Itoh M."/>
            <person name="Kato T."/>
            <person name="Kawaji H."/>
            <person name="Kawagashira N."/>
            <person name="Kawashima T."/>
            <person name="Kojima M."/>
            <person name="Kondo S."/>
            <person name="Konno H."/>
            <person name="Nakano K."/>
            <person name="Ninomiya N."/>
            <person name="Nishio T."/>
            <person name="Okada M."/>
            <person name="Plessy C."/>
            <person name="Shibata K."/>
            <person name="Shiraki T."/>
            <person name="Suzuki S."/>
            <person name="Tagami M."/>
            <person name="Waki K."/>
            <person name="Watahiki A."/>
            <person name="Okamura-Oho Y."/>
            <person name="Suzuki H."/>
            <person name="Kawai J."/>
            <person name="Hayashizaki Y."/>
        </authorList>
    </citation>
    <scope>NUCLEOTIDE SEQUENCE [LARGE SCALE MRNA]</scope>
    <source>
        <strain>C57BL/6J</strain>
        <tissue>Embryo</tissue>
    </source>
</reference>
<reference key="4">
    <citation type="journal article" date="2006" name="Mol. Endocrinol.">
        <title>Megalin is a receptor for apolipoprotein M, and kidney-specific megalin-deficiency confers urinary excretion of apolipoprotein M.</title>
        <authorList>
            <person name="Faber K."/>
            <person name="Hvidberg V."/>
            <person name="Moestrup S.K."/>
            <person name="Dahlbaeck B."/>
            <person name="Nielsen L.B."/>
        </authorList>
    </citation>
    <scope>INTERACTION WITH LRP2</scope>
</reference>
<reference key="5">
    <citation type="journal article" date="2010" name="Cell">
        <title>A tissue-specific atlas of mouse protein phosphorylation and expression.</title>
        <authorList>
            <person name="Huttlin E.L."/>
            <person name="Jedrychowski M.P."/>
            <person name="Elias J.E."/>
            <person name="Goswami T."/>
            <person name="Rad R."/>
            <person name="Beausoleil S.A."/>
            <person name="Villen J."/>
            <person name="Haas W."/>
            <person name="Sowa M.E."/>
            <person name="Gygi S.P."/>
        </authorList>
    </citation>
    <scope>IDENTIFICATION BY MASS SPECTROMETRY [LARGE SCALE ANALYSIS]</scope>
    <source>
        <tissue>Brown adipose tissue</tissue>
        <tissue>Heart</tissue>
        <tissue>Kidney</tissue>
        <tissue>Liver</tissue>
        <tissue>Lung</tissue>
        <tissue>Testis</tissue>
    </source>
</reference>
<reference key="6">
    <citation type="journal article" date="2010" name="J. Mol. Biol.">
        <title>Mouse ApoM displays an unprecedented seven-stranded lipocalin fold: folding decoy or alternative native fold?</title>
        <authorList>
            <person name="Sevvana M."/>
            <person name="Kassler K."/>
            <person name="Ahnstrom J."/>
            <person name="Weiler S."/>
            <person name="Dahlback B."/>
            <person name="Sticht H."/>
            <person name="Muller Y.A."/>
        </authorList>
    </citation>
    <scope>X-RAY CRYSTALLOGRAPHY (2.5 ANGSTROMS) OF 20-90</scope>
    <scope>DISULFIDE BONDS</scope>
</reference>
<keyword id="KW-0002">3D-structure</keyword>
<keyword id="KW-1015">Disulfide bond</keyword>
<keyword id="KW-0345">HDL</keyword>
<keyword id="KW-0445">Lipid transport</keyword>
<keyword id="KW-1185">Reference proteome</keyword>
<keyword id="KW-0964">Secreted</keyword>
<keyword id="KW-0732">Signal</keyword>
<keyword id="KW-0813">Transport</keyword>
<name>APOM_MOUSE</name>
<proteinExistence type="evidence at protein level"/>